<feature type="chain" id="PRO_1000057559" description="S-adenosylmethionine synthase">
    <location>
        <begin position="1"/>
        <end position="384"/>
    </location>
</feature>
<feature type="region of interest" description="Flexible loop" evidence="1">
    <location>
        <begin position="99"/>
        <end position="109"/>
    </location>
</feature>
<feature type="binding site" description="in other chain" evidence="1">
    <location>
        <position position="15"/>
    </location>
    <ligand>
        <name>ATP</name>
        <dbReference type="ChEBI" id="CHEBI:30616"/>
        <note>ligand shared between two neighboring subunits</note>
    </ligand>
</feature>
<feature type="binding site" evidence="1">
    <location>
        <position position="17"/>
    </location>
    <ligand>
        <name>Mg(2+)</name>
        <dbReference type="ChEBI" id="CHEBI:18420"/>
    </ligand>
</feature>
<feature type="binding site" evidence="1">
    <location>
        <position position="43"/>
    </location>
    <ligand>
        <name>K(+)</name>
        <dbReference type="ChEBI" id="CHEBI:29103"/>
    </ligand>
</feature>
<feature type="binding site" description="in other chain" evidence="1">
    <location>
        <position position="56"/>
    </location>
    <ligand>
        <name>L-methionine</name>
        <dbReference type="ChEBI" id="CHEBI:57844"/>
        <note>ligand shared between two neighboring subunits</note>
    </ligand>
</feature>
<feature type="binding site" description="in other chain" evidence="1">
    <location>
        <position position="99"/>
    </location>
    <ligand>
        <name>L-methionine</name>
        <dbReference type="ChEBI" id="CHEBI:57844"/>
        <note>ligand shared between two neighboring subunits</note>
    </ligand>
</feature>
<feature type="binding site" description="in other chain" evidence="1">
    <location>
        <begin position="164"/>
        <end position="166"/>
    </location>
    <ligand>
        <name>ATP</name>
        <dbReference type="ChEBI" id="CHEBI:30616"/>
        <note>ligand shared between two neighboring subunits</note>
    </ligand>
</feature>
<feature type="binding site" description="in other chain" evidence="1">
    <location>
        <begin position="230"/>
        <end position="231"/>
    </location>
    <ligand>
        <name>ATP</name>
        <dbReference type="ChEBI" id="CHEBI:30616"/>
        <note>ligand shared between two neighboring subunits</note>
    </ligand>
</feature>
<feature type="binding site" evidence="1">
    <location>
        <position position="239"/>
    </location>
    <ligand>
        <name>ATP</name>
        <dbReference type="ChEBI" id="CHEBI:30616"/>
        <note>ligand shared between two neighboring subunits</note>
    </ligand>
</feature>
<feature type="binding site" evidence="1">
    <location>
        <position position="239"/>
    </location>
    <ligand>
        <name>L-methionine</name>
        <dbReference type="ChEBI" id="CHEBI:57844"/>
        <note>ligand shared between two neighboring subunits</note>
    </ligand>
</feature>
<feature type="binding site" description="in other chain" evidence="1">
    <location>
        <begin position="245"/>
        <end position="246"/>
    </location>
    <ligand>
        <name>ATP</name>
        <dbReference type="ChEBI" id="CHEBI:30616"/>
        <note>ligand shared between two neighboring subunits</note>
    </ligand>
</feature>
<feature type="binding site" evidence="1">
    <location>
        <position position="262"/>
    </location>
    <ligand>
        <name>ATP</name>
        <dbReference type="ChEBI" id="CHEBI:30616"/>
        <note>ligand shared between two neighboring subunits</note>
    </ligand>
</feature>
<feature type="binding site" evidence="1">
    <location>
        <position position="266"/>
    </location>
    <ligand>
        <name>ATP</name>
        <dbReference type="ChEBI" id="CHEBI:30616"/>
        <note>ligand shared between two neighboring subunits</note>
    </ligand>
</feature>
<feature type="binding site" description="in other chain" evidence="1">
    <location>
        <position position="270"/>
    </location>
    <ligand>
        <name>L-methionine</name>
        <dbReference type="ChEBI" id="CHEBI:57844"/>
        <note>ligand shared between two neighboring subunits</note>
    </ligand>
</feature>
<dbReference type="EC" id="2.5.1.6" evidence="1"/>
<dbReference type="EMBL" id="CP000800">
    <property type="protein sequence ID" value="ABV20091.1"/>
    <property type="molecule type" value="Genomic_DNA"/>
</dbReference>
<dbReference type="RefSeq" id="WP_001062128.1">
    <property type="nucleotide sequence ID" value="NC_009801.1"/>
</dbReference>
<dbReference type="SMR" id="A7ZR64"/>
<dbReference type="GeneID" id="93779055"/>
<dbReference type="KEGG" id="ecw:EcE24377A_3284"/>
<dbReference type="HOGENOM" id="CLU_041802_1_1_6"/>
<dbReference type="UniPathway" id="UPA00315">
    <property type="reaction ID" value="UER00080"/>
</dbReference>
<dbReference type="Proteomes" id="UP000001122">
    <property type="component" value="Chromosome"/>
</dbReference>
<dbReference type="GO" id="GO:0005737">
    <property type="term" value="C:cytoplasm"/>
    <property type="evidence" value="ECO:0007669"/>
    <property type="project" value="UniProtKB-SubCell"/>
</dbReference>
<dbReference type="GO" id="GO:0005524">
    <property type="term" value="F:ATP binding"/>
    <property type="evidence" value="ECO:0007669"/>
    <property type="project" value="UniProtKB-UniRule"/>
</dbReference>
<dbReference type="GO" id="GO:0000287">
    <property type="term" value="F:magnesium ion binding"/>
    <property type="evidence" value="ECO:0007669"/>
    <property type="project" value="UniProtKB-UniRule"/>
</dbReference>
<dbReference type="GO" id="GO:0004478">
    <property type="term" value="F:methionine adenosyltransferase activity"/>
    <property type="evidence" value="ECO:0007669"/>
    <property type="project" value="UniProtKB-UniRule"/>
</dbReference>
<dbReference type="GO" id="GO:0006730">
    <property type="term" value="P:one-carbon metabolic process"/>
    <property type="evidence" value="ECO:0007669"/>
    <property type="project" value="UniProtKB-KW"/>
</dbReference>
<dbReference type="GO" id="GO:0006556">
    <property type="term" value="P:S-adenosylmethionine biosynthetic process"/>
    <property type="evidence" value="ECO:0007669"/>
    <property type="project" value="UniProtKB-UniRule"/>
</dbReference>
<dbReference type="CDD" id="cd18079">
    <property type="entry name" value="S-AdoMet_synt"/>
    <property type="match status" value="1"/>
</dbReference>
<dbReference type="FunFam" id="3.30.300.10:FF:000001">
    <property type="entry name" value="S-adenosylmethionine synthase"/>
    <property type="match status" value="1"/>
</dbReference>
<dbReference type="FunFam" id="3.30.300.10:FF:000003">
    <property type="entry name" value="S-adenosylmethionine synthase"/>
    <property type="match status" value="1"/>
</dbReference>
<dbReference type="Gene3D" id="3.30.300.10">
    <property type="match status" value="3"/>
</dbReference>
<dbReference type="HAMAP" id="MF_00086">
    <property type="entry name" value="S_AdoMet_synth1"/>
    <property type="match status" value="1"/>
</dbReference>
<dbReference type="InterPro" id="IPR022631">
    <property type="entry name" value="ADOMET_SYNTHASE_CS"/>
</dbReference>
<dbReference type="InterPro" id="IPR022630">
    <property type="entry name" value="S-AdoMet_synt_C"/>
</dbReference>
<dbReference type="InterPro" id="IPR022629">
    <property type="entry name" value="S-AdoMet_synt_central"/>
</dbReference>
<dbReference type="InterPro" id="IPR022628">
    <property type="entry name" value="S-AdoMet_synt_N"/>
</dbReference>
<dbReference type="InterPro" id="IPR002133">
    <property type="entry name" value="S-AdoMet_synthetase"/>
</dbReference>
<dbReference type="InterPro" id="IPR022636">
    <property type="entry name" value="S-AdoMet_synthetase_sfam"/>
</dbReference>
<dbReference type="NCBIfam" id="TIGR01034">
    <property type="entry name" value="metK"/>
    <property type="match status" value="1"/>
</dbReference>
<dbReference type="PANTHER" id="PTHR11964">
    <property type="entry name" value="S-ADENOSYLMETHIONINE SYNTHETASE"/>
    <property type="match status" value="1"/>
</dbReference>
<dbReference type="Pfam" id="PF02773">
    <property type="entry name" value="S-AdoMet_synt_C"/>
    <property type="match status" value="1"/>
</dbReference>
<dbReference type="Pfam" id="PF02772">
    <property type="entry name" value="S-AdoMet_synt_M"/>
    <property type="match status" value="1"/>
</dbReference>
<dbReference type="Pfam" id="PF00438">
    <property type="entry name" value="S-AdoMet_synt_N"/>
    <property type="match status" value="1"/>
</dbReference>
<dbReference type="PIRSF" id="PIRSF000497">
    <property type="entry name" value="MAT"/>
    <property type="match status" value="1"/>
</dbReference>
<dbReference type="SUPFAM" id="SSF55973">
    <property type="entry name" value="S-adenosylmethionine synthetase"/>
    <property type="match status" value="3"/>
</dbReference>
<dbReference type="PROSITE" id="PS00376">
    <property type="entry name" value="ADOMET_SYNTHASE_1"/>
    <property type="match status" value="1"/>
</dbReference>
<dbReference type="PROSITE" id="PS00377">
    <property type="entry name" value="ADOMET_SYNTHASE_2"/>
    <property type="match status" value="1"/>
</dbReference>
<organism>
    <name type="scientific">Escherichia coli O139:H28 (strain E24377A / ETEC)</name>
    <dbReference type="NCBI Taxonomy" id="331111"/>
    <lineage>
        <taxon>Bacteria</taxon>
        <taxon>Pseudomonadati</taxon>
        <taxon>Pseudomonadota</taxon>
        <taxon>Gammaproteobacteria</taxon>
        <taxon>Enterobacterales</taxon>
        <taxon>Enterobacteriaceae</taxon>
        <taxon>Escherichia</taxon>
    </lineage>
</organism>
<sequence>MAKHLFTSESVSEGHPDKIADQISDAVLDAILEQDPKARVACETYVKTGMVLVGGEITTSAWVDIEEITRNTVREIGYVHSDMGFDANSCAVLSAIGKQSPDINQGVDRADPLEQGAGDQGLMFGYATNETDVLMPAPITYAHRLVQRQAEVRKNGTLPWLRPDAKSQVTFQYDDGKIVGIDAVVLSTQHSEEIDQKSLQEAVMEEIIKPILPAEWLTSATKFFINPTGRFVIGGPMGDCGLTGRKIIVDTYGGMARHGGGAFSGKDPSKVDRSAAYAARYVAKNIVAAGLADRCEIQVSYAIGVAEPTSIMVETFGTEKVPSEQLTLLVREFFDLRPYGLIQMLDLLHPIYKETAAYGHFGREHFPWEKTDKAQLLRDAAGLK</sequence>
<proteinExistence type="inferred from homology"/>
<comment type="function">
    <text evidence="1">Catalyzes the formation of S-adenosylmethionine (AdoMet) from methionine and ATP. The overall synthetic reaction is composed of two sequential steps, AdoMet formation and the subsequent tripolyphosphate hydrolysis which occurs prior to release of AdoMet from the enzyme.</text>
</comment>
<comment type="catalytic activity">
    <reaction evidence="1">
        <text>L-methionine + ATP + H2O = S-adenosyl-L-methionine + phosphate + diphosphate</text>
        <dbReference type="Rhea" id="RHEA:21080"/>
        <dbReference type="ChEBI" id="CHEBI:15377"/>
        <dbReference type="ChEBI" id="CHEBI:30616"/>
        <dbReference type="ChEBI" id="CHEBI:33019"/>
        <dbReference type="ChEBI" id="CHEBI:43474"/>
        <dbReference type="ChEBI" id="CHEBI:57844"/>
        <dbReference type="ChEBI" id="CHEBI:59789"/>
        <dbReference type="EC" id="2.5.1.6"/>
    </reaction>
</comment>
<comment type="cofactor">
    <cofactor evidence="1">
        <name>Mg(2+)</name>
        <dbReference type="ChEBI" id="CHEBI:18420"/>
    </cofactor>
    <text evidence="1">Binds 2 divalent ions per subunit.</text>
</comment>
<comment type="cofactor">
    <cofactor evidence="1">
        <name>K(+)</name>
        <dbReference type="ChEBI" id="CHEBI:29103"/>
    </cofactor>
    <text evidence="1">Binds 1 potassium ion per subunit.</text>
</comment>
<comment type="pathway">
    <text evidence="1">Amino-acid biosynthesis; S-adenosyl-L-methionine biosynthesis; S-adenosyl-L-methionine from L-methionine: step 1/1.</text>
</comment>
<comment type="subunit">
    <text evidence="1">Homotetramer; dimer of dimers.</text>
</comment>
<comment type="subcellular location">
    <subcellularLocation>
        <location evidence="1">Cytoplasm</location>
    </subcellularLocation>
</comment>
<comment type="similarity">
    <text evidence="1">Belongs to the AdoMet synthase family.</text>
</comment>
<keyword id="KW-0067">ATP-binding</keyword>
<keyword id="KW-0963">Cytoplasm</keyword>
<keyword id="KW-0460">Magnesium</keyword>
<keyword id="KW-0479">Metal-binding</keyword>
<keyword id="KW-0547">Nucleotide-binding</keyword>
<keyword id="KW-0554">One-carbon metabolism</keyword>
<keyword id="KW-0630">Potassium</keyword>
<keyword id="KW-1185">Reference proteome</keyword>
<keyword id="KW-0808">Transferase</keyword>
<accession>A7ZR64</accession>
<evidence type="ECO:0000255" key="1">
    <source>
        <dbReference type="HAMAP-Rule" id="MF_00086"/>
    </source>
</evidence>
<protein>
    <recommendedName>
        <fullName evidence="1">S-adenosylmethionine synthase</fullName>
        <shortName evidence="1">AdoMet synthase</shortName>
        <ecNumber evidence="1">2.5.1.6</ecNumber>
    </recommendedName>
    <alternativeName>
        <fullName evidence="1">MAT</fullName>
    </alternativeName>
    <alternativeName>
        <fullName evidence="1">Methionine adenosyltransferase</fullName>
    </alternativeName>
</protein>
<name>METK_ECO24</name>
<reference key="1">
    <citation type="journal article" date="2008" name="J. Bacteriol.">
        <title>The pangenome structure of Escherichia coli: comparative genomic analysis of E. coli commensal and pathogenic isolates.</title>
        <authorList>
            <person name="Rasko D.A."/>
            <person name="Rosovitz M.J."/>
            <person name="Myers G.S.A."/>
            <person name="Mongodin E.F."/>
            <person name="Fricke W.F."/>
            <person name="Gajer P."/>
            <person name="Crabtree J."/>
            <person name="Sebaihia M."/>
            <person name="Thomson N.R."/>
            <person name="Chaudhuri R."/>
            <person name="Henderson I.R."/>
            <person name="Sperandio V."/>
            <person name="Ravel J."/>
        </authorList>
    </citation>
    <scope>NUCLEOTIDE SEQUENCE [LARGE SCALE GENOMIC DNA]</scope>
    <source>
        <strain>E24377A / ETEC</strain>
    </source>
</reference>
<gene>
    <name evidence="1" type="primary">metK</name>
    <name type="ordered locus">EcE24377A_3284</name>
</gene>